<accession>A0KAV6</accession>
<keyword id="KW-0067">ATP-binding</keyword>
<keyword id="KW-0997">Cell inner membrane</keyword>
<keyword id="KW-1003">Cell membrane</keyword>
<keyword id="KW-0472">Membrane</keyword>
<keyword id="KW-0547">Nucleotide-binding</keyword>
<keyword id="KW-1278">Translocase</keyword>
<keyword id="KW-0813">Transport</keyword>
<sequence length="265" mass="28904">MSTLEVRQVSVAYPGERGRPTTQALAQVDLRIDAGEFVVALGASGCGKTTLLNCMAGFVAPTTGDVRVDGVPIAGPGADRGVVFQKYALLPWLDVLDNVALGLRFARVSKAEREARAREMLTLVGLERHAHARVYELSGGMQQRVGIARALASDPRVLLMDEPMGALDAMTRGTMQALVLDVWARTGKTVFFITHDVEEALFLATRLVVMTPGPGRIAETFELPFARRYVESRDARAVKSSPDFIGWRERLIAYLHRDEAVAEPA</sequence>
<feature type="chain" id="PRO_0000275822" description="Taurine import ATP-binding protein TauB">
    <location>
        <begin position="1"/>
        <end position="265"/>
    </location>
</feature>
<feature type="domain" description="ABC transporter" evidence="1">
    <location>
        <begin position="6"/>
        <end position="237"/>
    </location>
</feature>
<feature type="binding site" evidence="1">
    <location>
        <begin position="42"/>
        <end position="49"/>
    </location>
    <ligand>
        <name>ATP</name>
        <dbReference type="ChEBI" id="CHEBI:30616"/>
    </ligand>
</feature>
<dbReference type="EC" id="7.6.2.7" evidence="1"/>
<dbReference type="EMBL" id="CP000458">
    <property type="protein sequence ID" value="ABK09633.1"/>
    <property type="molecule type" value="Genomic_DNA"/>
</dbReference>
<dbReference type="RefSeq" id="WP_011546301.1">
    <property type="nucleotide sequence ID" value="NC_008542.1"/>
</dbReference>
<dbReference type="SMR" id="A0KAV6"/>
<dbReference type="KEGG" id="bch:Bcen2424_2885"/>
<dbReference type="HOGENOM" id="CLU_000604_1_22_4"/>
<dbReference type="GO" id="GO:0005886">
    <property type="term" value="C:plasma membrane"/>
    <property type="evidence" value="ECO:0007669"/>
    <property type="project" value="UniProtKB-SubCell"/>
</dbReference>
<dbReference type="GO" id="GO:0015411">
    <property type="term" value="F:ABC-type taurine transporter transporter activity"/>
    <property type="evidence" value="ECO:0007669"/>
    <property type="project" value="UniProtKB-EC"/>
</dbReference>
<dbReference type="GO" id="GO:0005524">
    <property type="term" value="F:ATP binding"/>
    <property type="evidence" value="ECO:0007669"/>
    <property type="project" value="UniProtKB-KW"/>
</dbReference>
<dbReference type="GO" id="GO:0016887">
    <property type="term" value="F:ATP hydrolysis activity"/>
    <property type="evidence" value="ECO:0007669"/>
    <property type="project" value="InterPro"/>
</dbReference>
<dbReference type="CDD" id="cd03293">
    <property type="entry name" value="ABC_NrtD_SsuB_transporters"/>
    <property type="match status" value="1"/>
</dbReference>
<dbReference type="Gene3D" id="3.40.50.300">
    <property type="entry name" value="P-loop containing nucleotide triphosphate hydrolases"/>
    <property type="match status" value="1"/>
</dbReference>
<dbReference type="InterPro" id="IPR003593">
    <property type="entry name" value="AAA+_ATPase"/>
</dbReference>
<dbReference type="InterPro" id="IPR003439">
    <property type="entry name" value="ABC_transporter-like_ATP-bd"/>
</dbReference>
<dbReference type="InterPro" id="IPR017871">
    <property type="entry name" value="ABC_transporter-like_CS"/>
</dbReference>
<dbReference type="InterPro" id="IPR050166">
    <property type="entry name" value="ABC_transporter_ATP-bind"/>
</dbReference>
<dbReference type="InterPro" id="IPR027417">
    <property type="entry name" value="P-loop_NTPase"/>
</dbReference>
<dbReference type="PANTHER" id="PTHR42788:SF18">
    <property type="entry name" value="TAURINE IMPORT ATP-BINDING PROTEIN TAUB"/>
    <property type="match status" value="1"/>
</dbReference>
<dbReference type="PANTHER" id="PTHR42788">
    <property type="entry name" value="TAURINE IMPORT ATP-BINDING PROTEIN-RELATED"/>
    <property type="match status" value="1"/>
</dbReference>
<dbReference type="Pfam" id="PF00005">
    <property type="entry name" value="ABC_tran"/>
    <property type="match status" value="1"/>
</dbReference>
<dbReference type="SMART" id="SM00382">
    <property type="entry name" value="AAA"/>
    <property type="match status" value="1"/>
</dbReference>
<dbReference type="SUPFAM" id="SSF52540">
    <property type="entry name" value="P-loop containing nucleoside triphosphate hydrolases"/>
    <property type="match status" value="1"/>
</dbReference>
<dbReference type="PROSITE" id="PS00211">
    <property type="entry name" value="ABC_TRANSPORTER_1"/>
    <property type="match status" value="1"/>
</dbReference>
<dbReference type="PROSITE" id="PS50893">
    <property type="entry name" value="ABC_TRANSPORTER_2"/>
    <property type="match status" value="1"/>
</dbReference>
<dbReference type="PROSITE" id="PS51250">
    <property type="entry name" value="TAUB"/>
    <property type="match status" value="1"/>
</dbReference>
<protein>
    <recommendedName>
        <fullName evidence="1">Taurine import ATP-binding protein TauB</fullName>
        <ecNumber evidence="1">7.6.2.7</ecNumber>
    </recommendedName>
</protein>
<proteinExistence type="inferred from homology"/>
<evidence type="ECO:0000255" key="1">
    <source>
        <dbReference type="HAMAP-Rule" id="MF_01714"/>
    </source>
</evidence>
<gene>
    <name evidence="1" type="primary">tauB</name>
    <name type="ordered locus">Bcen2424_2885</name>
</gene>
<reference key="1">
    <citation type="submission" date="2006-08" db="EMBL/GenBank/DDBJ databases">
        <title>Complete sequence of chromosome 1 of Burkholderia cenocepacia HI2424.</title>
        <authorList>
            <person name="Copeland A."/>
            <person name="Lucas S."/>
            <person name="Lapidus A."/>
            <person name="Barry K."/>
            <person name="Detter J.C."/>
            <person name="Glavina del Rio T."/>
            <person name="Hammon N."/>
            <person name="Israni S."/>
            <person name="Pitluck S."/>
            <person name="Chain P."/>
            <person name="Malfatti S."/>
            <person name="Shin M."/>
            <person name="Vergez L."/>
            <person name="Schmutz J."/>
            <person name="Larimer F."/>
            <person name="Land M."/>
            <person name="Hauser L."/>
            <person name="Kyrpides N."/>
            <person name="Kim E."/>
            <person name="LiPuma J.J."/>
            <person name="Gonzalez C.F."/>
            <person name="Konstantinidis K."/>
            <person name="Tiedje J.M."/>
            <person name="Richardson P."/>
        </authorList>
    </citation>
    <scope>NUCLEOTIDE SEQUENCE [LARGE SCALE GENOMIC DNA]</scope>
    <source>
        <strain>HI2424</strain>
    </source>
</reference>
<name>TAUB_BURCH</name>
<organism>
    <name type="scientific">Burkholderia cenocepacia (strain HI2424)</name>
    <dbReference type="NCBI Taxonomy" id="331272"/>
    <lineage>
        <taxon>Bacteria</taxon>
        <taxon>Pseudomonadati</taxon>
        <taxon>Pseudomonadota</taxon>
        <taxon>Betaproteobacteria</taxon>
        <taxon>Burkholderiales</taxon>
        <taxon>Burkholderiaceae</taxon>
        <taxon>Burkholderia</taxon>
        <taxon>Burkholderia cepacia complex</taxon>
    </lineage>
</organism>
<comment type="function">
    <text evidence="1">Part of the ABC transporter complex TauABC involved in taurine import. Responsible for energy coupling to the transport system.</text>
</comment>
<comment type="catalytic activity">
    <reaction evidence="1">
        <text>taurine(out) + ATP + H2O = taurine(in) + ADP + phosphate + H(+)</text>
        <dbReference type="Rhea" id="RHEA:14613"/>
        <dbReference type="ChEBI" id="CHEBI:15377"/>
        <dbReference type="ChEBI" id="CHEBI:15378"/>
        <dbReference type="ChEBI" id="CHEBI:30616"/>
        <dbReference type="ChEBI" id="CHEBI:43474"/>
        <dbReference type="ChEBI" id="CHEBI:456216"/>
        <dbReference type="ChEBI" id="CHEBI:507393"/>
        <dbReference type="EC" id="7.6.2.7"/>
    </reaction>
</comment>
<comment type="subunit">
    <text evidence="1">The complex is composed of two ATP-binding proteins (TauB), two transmembrane proteins (TauC) and a solute-binding protein (TauA).</text>
</comment>
<comment type="subcellular location">
    <subcellularLocation>
        <location evidence="1">Cell inner membrane</location>
        <topology evidence="1">Peripheral membrane protein</topology>
    </subcellularLocation>
</comment>
<comment type="similarity">
    <text evidence="1">Belongs to the ABC transporter superfamily. Taurine importer (TC 3.A.1.17.1) family.</text>
</comment>